<protein>
    <recommendedName>
        <fullName>Secretory carrier-associated membrane protein 4</fullName>
        <shortName>SC4</shortName>
        <shortName>Secretory carrier membrane protein 4</shortName>
    </recommendedName>
</protein>
<reference key="1">
    <citation type="submission" date="2000-01" db="EMBL/GenBank/DDBJ databases">
        <title>The SCAMP (secretory carrier membrane protein) family: structure and membrane topology.</title>
        <authorList>
            <person name="Castle J.D."/>
            <person name="Hubbard C.H. Jr."/>
            <person name="Singleton D.R."/>
        </authorList>
    </citation>
    <scope>NUCLEOTIDE SEQUENCE [MRNA]</scope>
</reference>
<reference key="2">
    <citation type="journal article" date="2000" name="J. Neurosci.">
        <title>Novel SCAMPs lacking NPF repeats: ubiquitous and synaptic vesicle-specific forms implicate SCAMPs in multiple membrane-trafficking functions.</title>
        <authorList>
            <person name="Fernandez-Chacon R."/>
            <person name="Suedhof T.C."/>
        </authorList>
    </citation>
    <scope>NUCLEOTIDE SEQUENCE [MRNA]</scope>
</reference>
<reference key="3">
    <citation type="journal article" date="2004" name="Genome Res.">
        <title>The status, quality, and expansion of the NIH full-length cDNA project: the Mammalian Gene Collection (MGC).</title>
        <authorList>
            <consortium name="The MGC Project Team"/>
        </authorList>
    </citation>
    <scope>NUCLEOTIDE SEQUENCE [LARGE SCALE MRNA]</scope>
</reference>
<reference key="4">
    <citation type="journal article" date="2010" name="Cell">
        <title>A tissue-specific atlas of mouse protein phosphorylation and expression.</title>
        <authorList>
            <person name="Huttlin E.L."/>
            <person name="Jedrychowski M.P."/>
            <person name="Elias J.E."/>
            <person name="Goswami T."/>
            <person name="Rad R."/>
            <person name="Beausoleil S.A."/>
            <person name="Villen J."/>
            <person name="Haas W."/>
            <person name="Sowa M.E."/>
            <person name="Gygi S.P."/>
        </authorList>
    </citation>
    <scope>IDENTIFICATION BY MASS SPECTROMETRY [LARGE SCALE ANALYSIS]</scope>
    <source>
        <tissue>Spleen</tissue>
        <tissue>Testis</tissue>
    </source>
</reference>
<keyword id="KW-0472">Membrane</keyword>
<keyword id="KW-0597">Phosphoprotein</keyword>
<keyword id="KW-0653">Protein transport</keyword>
<keyword id="KW-1185">Reference proteome</keyword>
<keyword id="KW-0812">Transmembrane</keyword>
<keyword id="KW-1133">Transmembrane helix</keyword>
<keyword id="KW-0813">Transport</keyword>
<gene>
    <name type="primary">Scamp4</name>
</gene>
<comment type="function">
    <text evidence="1">Probably involved in membrane protein trafficking.</text>
</comment>
<comment type="subcellular location">
    <subcellularLocation>
        <location>Membrane</location>
        <topology>Multi-pass membrane protein</topology>
    </subcellularLocation>
</comment>
<comment type="similarity">
    <text evidence="4">Belongs to the SCAMP family.</text>
</comment>
<name>SCAM4_MOUSE</name>
<accession>Q9JKV5</accession>
<organism>
    <name type="scientific">Mus musculus</name>
    <name type="common">Mouse</name>
    <dbReference type="NCBI Taxonomy" id="10090"/>
    <lineage>
        <taxon>Eukaryota</taxon>
        <taxon>Metazoa</taxon>
        <taxon>Chordata</taxon>
        <taxon>Craniata</taxon>
        <taxon>Vertebrata</taxon>
        <taxon>Euteleostomi</taxon>
        <taxon>Mammalia</taxon>
        <taxon>Eutheria</taxon>
        <taxon>Euarchontoglires</taxon>
        <taxon>Glires</taxon>
        <taxon>Rodentia</taxon>
        <taxon>Myomorpha</taxon>
        <taxon>Muroidea</taxon>
        <taxon>Muridae</taxon>
        <taxon>Murinae</taxon>
        <taxon>Mus</taxon>
        <taxon>Mus</taxon>
    </lineage>
</organism>
<sequence length="230" mass="25342">MAGKENNFPPLPPFLPLKPCFYQDFSDEIPVEHQVLVKRIYRLWMFYCATLGVNLVACLAWWIAGGAGANFGLALLWLVLFTPCSYVCWFRPAYKAFRADSSFNFMTFFFIFGAQFVLTVIQAIGFSGWGACGWLAAVGFFGTSVGAAVVMLVPAILFSLSALVMAVTIVKVHRIYRGAGGSLQKAQTEWSAGTWRNPPSREAQFNSFSGNSLPEYPTVPSYSSSGGHWP</sequence>
<evidence type="ECO:0000250" key="1"/>
<evidence type="ECO:0000250" key="2">
    <source>
        <dbReference type="UniProtKB" id="Q969E2"/>
    </source>
</evidence>
<evidence type="ECO:0000255" key="3"/>
<evidence type="ECO:0000305" key="4"/>
<dbReference type="EMBL" id="AF224721">
    <property type="protein sequence ID" value="AAF35368.1"/>
    <property type="molecule type" value="mRNA"/>
</dbReference>
<dbReference type="EMBL" id="AF295102">
    <property type="protein sequence ID" value="AAG02502.1"/>
    <property type="molecule type" value="mRNA"/>
</dbReference>
<dbReference type="EMBL" id="BC018215">
    <property type="protein sequence ID" value="AAH18215.1"/>
    <property type="molecule type" value="mRNA"/>
</dbReference>
<dbReference type="EMBL" id="BC054104">
    <property type="protein sequence ID" value="AAH54104.1"/>
    <property type="molecule type" value="mRNA"/>
</dbReference>
<dbReference type="CCDS" id="CCDS24028.1"/>
<dbReference type="RefSeq" id="NP_062521.1">
    <property type="nucleotide sequence ID" value="NM_019575.4"/>
</dbReference>
<dbReference type="FunCoup" id="Q9JKV5">
    <property type="interactions" value="715"/>
</dbReference>
<dbReference type="STRING" id="10090.ENSMUSP00000078808"/>
<dbReference type="iPTMnet" id="Q9JKV5"/>
<dbReference type="PhosphoSitePlus" id="Q9JKV5"/>
<dbReference type="SwissPalm" id="Q9JKV5"/>
<dbReference type="PaxDb" id="10090-ENSMUSP00000078808"/>
<dbReference type="ProteomicsDB" id="253405"/>
<dbReference type="Pumba" id="Q9JKV5"/>
<dbReference type="Antibodypedia" id="22844">
    <property type="antibodies" value="82 antibodies from 22 providers"/>
</dbReference>
<dbReference type="DNASU" id="56214"/>
<dbReference type="Ensembl" id="ENSMUST00000079883.12">
    <property type="protein sequence ID" value="ENSMUSP00000078808.5"/>
    <property type="gene ID" value="ENSMUSG00000113949.2"/>
</dbReference>
<dbReference type="Ensembl" id="ENSMUST00000180350.3">
    <property type="protein sequence ID" value="ENSMUSP00000137003.2"/>
    <property type="gene ID" value="ENSMUSG00000113949.2"/>
</dbReference>
<dbReference type="GeneID" id="56214"/>
<dbReference type="KEGG" id="mmu:56214"/>
<dbReference type="UCSC" id="uc007gdy.1">
    <property type="organism name" value="mouse"/>
</dbReference>
<dbReference type="AGR" id="MGI:1928947"/>
<dbReference type="CTD" id="113178"/>
<dbReference type="MGI" id="MGI:1928947">
    <property type="gene designation" value="Scamp4"/>
</dbReference>
<dbReference type="VEuPathDB" id="HostDB:ENSMUSG00000113949"/>
<dbReference type="eggNOG" id="KOG3088">
    <property type="taxonomic scope" value="Eukaryota"/>
</dbReference>
<dbReference type="GeneTree" id="ENSGT00940000162150"/>
<dbReference type="HOGENOM" id="CLU_066546_1_0_1"/>
<dbReference type="InParanoid" id="Q9JKV5"/>
<dbReference type="OMA" id="YPTGNQW"/>
<dbReference type="OrthoDB" id="242866at2759"/>
<dbReference type="PhylomeDB" id="Q9JKV5"/>
<dbReference type="TreeFam" id="TF313797"/>
<dbReference type="BioGRID-ORCS" id="56214">
    <property type="hits" value="2 hits in 45 CRISPR screens"/>
</dbReference>
<dbReference type="ChiTaRS" id="Scamp4">
    <property type="organism name" value="mouse"/>
</dbReference>
<dbReference type="PRO" id="PR:Q9JKV5"/>
<dbReference type="Proteomes" id="UP000000589">
    <property type="component" value="Chromosome 10"/>
</dbReference>
<dbReference type="RNAct" id="Q9JKV5">
    <property type="molecule type" value="protein"/>
</dbReference>
<dbReference type="Bgee" id="ENSMUSG00000113949">
    <property type="expression patterns" value="Expressed in yolk sac and 66 other cell types or tissues"/>
</dbReference>
<dbReference type="ExpressionAtlas" id="Q9JKV5">
    <property type="expression patterns" value="baseline and differential"/>
</dbReference>
<dbReference type="GO" id="GO:0016020">
    <property type="term" value="C:membrane"/>
    <property type="evidence" value="ECO:0007669"/>
    <property type="project" value="UniProtKB-SubCell"/>
</dbReference>
<dbReference type="GO" id="GO:0015031">
    <property type="term" value="P:protein transport"/>
    <property type="evidence" value="ECO:0007669"/>
    <property type="project" value="UniProtKB-KW"/>
</dbReference>
<dbReference type="InterPro" id="IPR007273">
    <property type="entry name" value="SCAMP"/>
</dbReference>
<dbReference type="PANTHER" id="PTHR10687:SF11">
    <property type="entry name" value="SECRETORY CARRIER-ASSOCIATED MEMBRANE PROTEIN 4"/>
    <property type="match status" value="1"/>
</dbReference>
<dbReference type="PANTHER" id="PTHR10687">
    <property type="entry name" value="SECRETORY CARRIER-ASSOCIATED MEMBRANE PROTEIN SCAMP"/>
    <property type="match status" value="1"/>
</dbReference>
<dbReference type="Pfam" id="PF04144">
    <property type="entry name" value="SCAMP"/>
    <property type="match status" value="1"/>
</dbReference>
<proteinExistence type="evidence at protein level"/>
<feature type="chain" id="PRO_0000191260" description="Secretory carrier-associated membrane protein 4">
    <location>
        <begin position="1"/>
        <end position="230"/>
    </location>
</feature>
<feature type="topological domain" description="Cytoplasmic" evidence="3">
    <location>
        <begin position="1"/>
        <end position="39"/>
    </location>
</feature>
<feature type="transmembrane region" description="Helical" evidence="3">
    <location>
        <begin position="40"/>
        <end position="60"/>
    </location>
</feature>
<feature type="transmembrane region" description="Helical" evidence="3">
    <location>
        <begin position="61"/>
        <end position="81"/>
    </location>
</feature>
<feature type="transmembrane region" description="Helical" evidence="3">
    <location>
        <begin position="106"/>
        <end position="126"/>
    </location>
</feature>
<feature type="transmembrane region" description="Helical" evidence="3">
    <location>
        <begin position="149"/>
        <end position="169"/>
    </location>
</feature>
<feature type="topological domain" description="Cytoplasmic" evidence="3">
    <location>
        <begin position="170"/>
        <end position="230"/>
    </location>
</feature>
<feature type="modified residue" description="Phosphothreonine" evidence="2">
    <location>
        <position position="194"/>
    </location>
</feature>